<accession>Q8EGC8</accession>
<dbReference type="EC" id="2.3.1.46" evidence="1"/>
<dbReference type="EMBL" id="AE014299">
    <property type="protein sequence ID" value="AAN54731.1"/>
    <property type="molecule type" value="Genomic_DNA"/>
</dbReference>
<dbReference type="RefSeq" id="NP_717287.1">
    <property type="nucleotide sequence ID" value="NC_004347.2"/>
</dbReference>
<dbReference type="RefSeq" id="WP_011071826.1">
    <property type="nucleotide sequence ID" value="NC_004347.2"/>
</dbReference>
<dbReference type="SMR" id="Q8EGC8"/>
<dbReference type="STRING" id="211586.SO_1676"/>
<dbReference type="PaxDb" id="211586-SO_1676"/>
<dbReference type="KEGG" id="son:SO_1676"/>
<dbReference type="PATRIC" id="fig|211586.12.peg.1615"/>
<dbReference type="eggNOG" id="COG1897">
    <property type="taxonomic scope" value="Bacteria"/>
</dbReference>
<dbReference type="HOGENOM" id="CLU_057851_0_1_6"/>
<dbReference type="OrthoDB" id="9772423at2"/>
<dbReference type="PhylomeDB" id="Q8EGC8"/>
<dbReference type="BioCyc" id="SONE211586:G1GMP-1542-MONOMER"/>
<dbReference type="UniPathway" id="UPA00051">
    <property type="reaction ID" value="UER00075"/>
</dbReference>
<dbReference type="Proteomes" id="UP000008186">
    <property type="component" value="Chromosome"/>
</dbReference>
<dbReference type="GO" id="GO:0005737">
    <property type="term" value="C:cytoplasm"/>
    <property type="evidence" value="ECO:0007669"/>
    <property type="project" value="UniProtKB-SubCell"/>
</dbReference>
<dbReference type="GO" id="GO:0004414">
    <property type="term" value="F:homoserine O-acetyltransferase activity"/>
    <property type="evidence" value="ECO:0007669"/>
    <property type="project" value="UniProtKB-UniRule"/>
</dbReference>
<dbReference type="GO" id="GO:0008899">
    <property type="term" value="F:homoserine O-succinyltransferase activity"/>
    <property type="evidence" value="ECO:0000318"/>
    <property type="project" value="GO_Central"/>
</dbReference>
<dbReference type="GO" id="GO:0019281">
    <property type="term" value="P:L-methionine biosynthetic process from homoserine via O-succinyl-L-homoserine and cystathionine"/>
    <property type="evidence" value="ECO:0007669"/>
    <property type="project" value="InterPro"/>
</dbReference>
<dbReference type="CDD" id="cd03131">
    <property type="entry name" value="GATase1_HTS"/>
    <property type="match status" value="1"/>
</dbReference>
<dbReference type="FunFam" id="3.40.50.880:FF:000004">
    <property type="entry name" value="Homoserine O-succinyltransferase"/>
    <property type="match status" value="1"/>
</dbReference>
<dbReference type="Gene3D" id="3.40.50.880">
    <property type="match status" value="1"/>
</dbReference>
<dbReference type="HAMAP" id="MF_00295">
    <property type="entry name" value="MetA_acyltransf"/>
    <property type="match status" value="1"/>
</dbReference>
<dbReference type="InterPro" id="IPR029062">
    <property type="entry name" value="Class_I_gatase-like"/>
</dbReference>
<dbReference type="InterPro" id="IPR005697">
    <property type="entry name" value="HST_MetA"/>
</dbReference>
<dbReference type="InterPro" id="IPR033752">
    <property type="entry name" value="MetA_family"/>
</dbReference>
<dbReference type="NCBIfam" id="TIGR01001">
    <property type="entry name" value="metA"/>
    <property type="match status" value="1"/>
</dbReference>
<dbReference type="PANTHER" id="PTHR20919">
    <property type="entry name" value="HOMOSERINE O-SUCCINYLTRANSFERASE"/>
    <property type="match status" value="1"/>
</dbReference>
<dbReference type="PANTHER" id="PTHR20919:SF0">
    <property type="entry name" value="HOMOSERINE O-SUCCINYLTRANSFERASE"/>
    <property type="match status" value="1"/>
</dbReference>
<dbReference type="Pfam" id="PF04204">
    <property type="entry name" value="HTS"/>
    <property type="match status" value="1"/>
</dbReference>
<dbReference type="PIRSF" id="PIRSF000450">
    <property type="entry name" value="H_ser_succinyltr"/>
    <property type="match status" value="1"/>
</dbReference>
<dbReference type="SUPFAM" id="SSF52317">
    <property type="entry name" value="Class I glutamine amidotransferase-like"/>
    <property type="match status" value="1"/>
</dbReference>
<evidence type="ECO:0000255" key="1">
    <source>
        <dbReference type="HAMAP-Rule" id="MF_00295"/>
    </source>
</evidence>
<feature type="chain" id="PRO_0000199759" description="Homoserine O-succinyltransferase">
    <location>
        <begin position="1"/>
        <end position="313"/>
    </location>
</feature>
<feature type="active site" description="Acyl-thioester intermediate" evidence="1">
    <location>
        <position position="142"/>
    </location>
</feature>
<feature type="active site" description="Proton acceptor" evidence="1">
    <location>
        <position position="235"/>
    </location>
</feature>
<feature type="active site" evidence="1">
    <location>
        <position position="237"/>
    </location>
</feature>
<feature type="binding site" evidence="1">
    <location>
        <position position="163"/>
    </location>
    <ligand>
        <name>substrate</name>
    </ligand>
</feature>
<feature type="binding site" evidence="1">
    <location>
        <position position="192"/>
    </location>
    <ligand>
        <name>substrate</name>
    </ligand>
</feature>
<feature type="binding site" evidence="1">
    <location>
        <position position="249"/>
    </location>
    <ligand>
        <name>substrate</name>
    </ligand>
</feature>
<feature type="site" description="Important for acyl-CoA specificity" evidence="1">
    <location>
        <position position="111"/>
    </location>
</feature>
<feature type="site" description="Important for substrate specificity" evidence="1">
    <location>
        <position position="192"/>
    </location>
</feature>
<comment type="function">
    <text evidence="1">Transfers a succinyl group from succinyl-CoA to L-homoserine, forming succinyl-L-homoserine.</text>
</comment>
<comment type="catalytic activity">
    <reaction evidence="1">
        <text>L-homoserine + succinyl-CoA = O-succinyl-L-homoserine + CoA</text>
        <dbReference type="Rhea" id="RHEA:22008"/>
        <dbReference type="ChEBI" id="CHEBI:57287"/>
        <dbReference type="ChEBI" id="CHEBI:57292"/>
        <dbReference type="ChEBI" id="CHEBI:57476"/>
        <dbReference type="ChEBI" id="CHEBI:57661"/>
        <dbReference type="EC" id="2.3.1.46"/>
    </reaction>
</comment>
<comment type="pathway">
    <text evidence="1">Amino-acid biosynthesis; L-methionine biosynthesis via de novo pathway; O-succinyl-L-homoserine from L-homoserine: step 1/1.</text>
</comment>
<comment type="subcellular location">
    <subcellularLocation>
        <location evidence="1">Cytoplasm</location>
    </subcellularLocation>
</comment>
<comment type="similarity">
    <text evidence="1">Belongs to the MetA family.</text>
</comment>
<reference key="1">
    <citation type="journal article" date="2002" name="Nat. Biotechnol.">
        <title>Genome sequence of the dissimilatory metal ion-reducing bacterium Shewanella oneidensis.</title>
        <authorList>
            <person name="Heidelberg J.F."/>
            <person name="Paulsen I.T."/>
            <person name="Nelson K.E."/>
            <person name="Gaidos E.J."/>
            <person name="Nelson W.C."/>
            <person name="Read T.D."/>
            <person name="Eisen J.A."/>
            <person name="Seshadri R."/>
            <person name="Ward N.L."/>
            <person name="Methe B.A."/>
            <person name="Clayton R.A."/>
            <person name="Meyer T."/>
            <person name="Tsapin A."/>
            <person name="Scott J."/>
            <person name="Beanan M.J."/>
            <person name="Brinkac L.M."/>
            <person name="Daugherty S.C."/>
            <person name="DeBoy R.T."/>
            <person name="Dodson R.J."/>
            <person name="Durkin A.S."/>
            <person name="Haft D.H."/>
            <person name="Kolonay J.F."/>
            <person name="Madupu R."/>
            <person name="Peterson J.D."/>
            <person name="Umayam L.A."/>
            <person name="White O."/>
            <person name="Wolf A.M."/>
            <person name="Vamathevan J.J."/>
            <person name="Weidman J.F."/>
            <person name="Impraim M."/>
            <person name="Lee K."/>
            <person name="Berry K.J."/>
            <person name="Lee C."/>
            <person name="Mueller J."/>
            <person name="Khouri H.M."/>
            <person name="Gill J."/>
            <person name="Utterback T.R."/>
            <person name="McDonald L.A."/>
            <person name="Feldblyum T.V."/>
            <person name="Smith H.O."/>
            <person name="Venter J.C."/>
            <person name="Nealson K.H."/>
            <person name="Fraser C.M."/>
        </authorList>
    </citation>
    <scope>NUCLEOTIDE SEQUENCE [LARGE SCALE GENOMIC DNA]</scope>
    <source>
        <strain>ATCC 700550 / JCM 31522 / CIP 106686 / LMG 19005 / NCIMB 14063 / MR-1</strain>
    </source>
</reference>
<organism>
    <name type="scientific">Shewanella oneidensis (strain ATCC 700550 / JCM 31522 / CIP 106686 / LMG 19005 / NCIMB 14063 / MR-1)</name>
    <dbReference type="NCBI Taxonomy" id="211586"/>
    <lineage>
        <taxon>Bacteria</taxon>
        <taxon>Pseudomonadati</taxon>
        <taxon>Pseudomonadota</taxon>
        <taxon>Gammaproteobacteria</taxon>
        <taxon>Alteromonadales</taxon>
        <taxon>Shewanellaceae</taxon>
        <taxon>Shewanella</taxon>
    </lineage>
</organism>
<keyword id="KW-0012">Acyltransferase</keyword>
<keyword id="KW-0028">Amino-acid biosynthesis</keyword>
<keyword id="KW-0963">Cytoplasm</keyword>
<keyword id="KW-0486">Methionine biosynthesis</keyword>
<keyword id="KW-1185">Reference proteome</keyword>
<keyword id="KW-0808">Transferase</keyword>
<protein>
    <recommendedName>
        <fullName evidence="1">Homoserine O-succinyltransferase</fullName>
        <shortName evidence="1">HST</shortName>
        <ecNumber evidence="1">2.3.1.46</ecNumber>
    </recommendedName>
    <alternativeName>
        <fullName evidence="1">Homoserine transsuccinylase</fullName>
        <shortName evidence="1">HTS</shortName>
    </alternativeName>
</protein>
<name>METAS_SHEON</name>
<sequence length="313" mass="36569">MPVKIPDHLPAAGILESENIFVMSETRAANQDIRPMKVLILNLMPNKIETETQLLRLLGNTPLQVDVDLLRIHDKESKHTSIDHMNTFYRDFEDVRHKNYDGLIITGAPLGQIDFEDVTYWDHIREIIDWSQQHVTSVLFLCWAAHAGLYHLYGLNRKILEQKRSGVFVHRRTCQHFPLLRGFDDEFFAPHSRFAEMDVEEIRQHPQLQLLAESDEAGAYLVLSRNNRNLFVMGHPEYQKSTLNDEYHRDLAQSLNPNVPQNYYRNDDPKADAIARWHSHGSLLVSNWLNYYVYQLTPYDLSDMTAMTPWESQ</sequence>
<gene>
    <name evidence="1" type="primary">metAS</name>
    <name type="ordered locus">SO_1676</name>
</gene>
<proteinExistence type="inferred from homology"/>